<dbReference type="EC" id="3.2.1.41"/>
<dbReference type="EMBL" id="X52181">
    <property type="protein sequence ID" value="CAA36431.1"/>
    <property type="molecule type" value="Genomic_DNA"/>
</dbReference>
<dbReference type="EMBL" id="M12503">
    <property type="protein sequence ID" value="AAA25087.2"/>
    <property type="molecule type" value="Genomic_DNA"/>
</dbReference>
<dbReference type="EMBL" id="M29097">
    <property type="protein sequence ID" value="AAA61976.1"/>
    <property type="molecule type" value="Genomic_DNA"/>
</dbReference>
<dbReference type="PIR" id="S11823">
    <property type="entry name" value="S11823"/>
</dbReference>
<dbReference type="PIR" id="S38801">
    <property type="entry name" value="S38801"/>
</dbReference>
<dbReference type="PDB" id="2YOC">
    <property type="method" value="X-ray"/>
    <property type="resolution" value="2.88 A"/>
    <property type="chains" value="A/B=21-1089"/>
</dbReference>
<dbReference type="PDBsum" id="2YOC"/>
<dbReference type="SMR" id="P07206"/>
<dbReference type="CAZy" id="CBM41">
    <property type="family name" value="Carbohydrate-Binding Module Family 41"/>
</dbReference>
<dbReference type="CAZy" id="CBM48">
    <property type="family name" value="Carbohydrate-Binding Module Family 48"/>
</dbReference>
<dbReference type="CAZy" id="GH13">
    <property type="family name" value="Glycoside Hydrolase Family 13"/>
</dbReference>
<dbReference type="BRENDA" id="3.2.1.41">
    <property type="organism ID" value="2814"/>
</dbReference>
<dbReference type="EvolutionaryTrace" id="P07206"/>
<dbReference type="GO" id="GO:0005886">
    <property type="term" value="C:plasma membrane"/>
    <property type="evidence" value="ECO:0007669"/>
    <property type="project" value="UniProtKB-SubCell"/>
</dbReference>
<dbReference type="GO" id="GO:0030246">
    <property type="term" value="F:carbohydrate binding"/>
    <property type="evidence" value="ECO:0007669"/>
    <property type="project" value="InterPro"/>
</dbReference>
<dbReference type="GO" id="GO:0051060">
    <property type="term" value="F:pullulanase activity"/>
    <property type="evidence" value="ECO:0007669"/>
    <property type="project" value="UniProtKB-EC"/>
</dbReference>
<dbReference type="GO" id="GO:0005975">
    <property type="term" value="P:carbohydrate metabolic process"/>
    <property type="evidence" value="ECO:0007669"/>
    <property type="project" value="InterPro"/>
</dbReference>
<dbReference type="CDD" id="cd11341">
    <property type="entry name" value="AmyAc_Pullulanase_LD-like"/>
    <property type="match status" value="1"/>
</dbReference>
<dbReference type="CDD" id="cd10315">
    <property type="entry name" value="CBM41_pullulanase"/>
    <property type="match status" value="1"/>
</dbReference>
<dbReference type="CDD" id="cd02860">
    <property type="entry name" value="E_set_Pullulanase"/>
    <property type="match status" value="1"/>
</dbReference>
<dbReference type="Gene3D" id="2.60.40.1110">
    <property type="match status" value="1"/>
</dbReference>
<dbReference type="Gene3D" id="3.20.20.80">
    <property type="entry name" value="Glycosidases"/>
    <property type="match status" value="1"/>
</dbReference>
<dbReference type="Gene3D" id="2.60.40.1180">
    <property type="entry name" value="Golgi alpha-mannosidase II"/>
    <property type="match status" value="1"/>
</dbReference>
<dbReference type="Gene3D" id="2.60.40.10">
    <property type="entry name" value="Immunoglobulins"/>
    <property type="match status" value="1"/>
</dbReference>
<dbReference type="Gene3D" id="2.60.40.1130">
    <property type="entry name" value="Rab geranylgeranyltransferase alpha-subunit, insert domain"/>
    <property type="match status" value="1"/>
</dbReference>
<dbReference type="InterPro" id="IPR013784">
    <property type="entry name" value="Carb-bd-like_fold"/>
</dbReference>
<dbReference type="InterPro" id="IPR005323">
    <property type="entry name" value="CBM41_pullulanase"/>
</dbReference>
<dbReference type="InterPro" id="IPR006047">
    <property type="entry name" value="Glyco_hydro_13_cat_dom"/>
</dbReference>
<dbReference type="InterPro" id="IPR004193">
    <property type="entry name" value="Glyco_hydro_13_N"/>
</dbReference>
<dbReference type="InterPro" id="IPR013780">
    <property type="entry name" value="Glyco_hydro_b"/>
</dbReference>
<dbReference type="InterPro" id="IPR017853">
    <property type="entry name" value="Glycoside_hydrolase_SF"/>
</dbReference>
<dbReference type="InterPro" id="IPR013783">
    <property type="entry name" value="Ig-like_fold"/>
</dbReference>
<dbReference type="InterPro" id="IPR014756">
    <property type="entry name" value="Ig_E-set"/>
</dbReference>
<dbReference type="InterPro" id="IPR011839">
    <property type="entry name" value="Pullul_strch"/>
</dbReference>
<dbReference type="InterPro" id="IPR024561">
    <property type="entry name" value="Pullul_strch_C"/>
</dbReference>
<dbReference type="InterPro" id="IPR041111">
    <property type="entry name" value="Pullulanase_Ins"/>
</dbReference>
<dbReference type="InterPro" id="IPR040671">
    <property type="entry name" value="Pullulanase_N2"/>
</dbReference>
<dbReference type="NCBIfam" id="TIGR02103">
    <property type="entry name" value="pullul_strch"/>
    <property type="match status" value="1"/>
</dbReference>
<dbReference type="PANTHER" id="PTHR43002">
    <property type="entry name" value="GLYCOGEN DEBRANCHING ENZYME"/>
    <property type="match status" value="1"/>
</dbReference>
<dbReference type="Pfam" id="PF02922">
    <property type="entry name" value="CBM_48"/>
    <property type="match status" value="1"/>
</dbReference>
<dbReference type="Pfam" id="PF03714">
    <property type="entry name" value="PUD"/>
    <property type="match status" value="1"/>
</dbReference>
<dbReference type="Pfam" id="PF11852">
    <property type="entry name" value="Pullul_strch_C"/>
    <property type="match status" value="1"/>
</dbReference>
<dbReference type="Pfam" id="PF18494">
    <property type="entry name" value="Pullulanase_Ins"/>
    <property type="match status" value="1"/>
</dbReference>
<dbReference type="Pfam" id="PF17967">
    <property type="entry name" value="Pullulanase_N2"/>
    <property type="match status" value="1"/>
</dbReference>
<dbReference type="SMART" id="SM00642">
    <property type="entry name" value="Aamy"/>
    <property type="match status" value="1"/>
</dbReference>
<dbReference type="SUPFAM" id="SSF51445">
    <property type="entry name" value="(Trans)glycosidases"/>
    <property type="match status" value="1"/>
</dbReference>
<dbReference type="SUPFAM" id="SSF81296">
    <property type="entry name" value="E set domains"/>
    <property type="match status" value="2"/>
</dbReference>
<dbReference type="SUPFAM" id="SSF51011">
    <property type="entry name" value="Glycosyl hydrolase domain"/>
    <property type="match status" value="1"/>
</dbReference>
<dbReference type="SUPFAM" id="SSF49452">
    <property type="entry name" value="Starch-binding domain-like"/>
    <property type="match status" value="1"/>
</dbReference>
<dbReference type="PROSITE" id="PS51257">
    <property type="entry name" value="PROKAR_LIPOPROTEIN"/>
    <property type="match status" value="1"/>
</dbReference>
<keyword id="KW-0002">3D-structure</keyword>
<keyword id="KW-1003">Cell membrane</keyword>
<keyword id="KW-0326">Glycosidase</keyword>
<keyword id="KW-0378">Hydrolase</keyword>
<keyword id="KW-0449">Lipoprotein</keyword>
<keyword id="KW-0472">Membrane</keyword>
<keyword id="KW-0564">Palmitate</keyword>
<keyword id="KW-0732">Signal</keyword>
<protein>
    <recommendedName>
        <fullName>Pullulanase</fullName>
        <ecNumber>3.2.1.41</ecNumber>
    </recommendedName>
    <alternativeName>
        <fullName>Alpha-dextrin endo-1,6-alpha-glucosidase</fullName>
    </alternativeName>
    <alternativeName>
        <fullName>Pullulan 6-glucanohydrolase</fullName>
    </alternativeName>
</protein>
<organism>
    <name type="scientific">Klebsiella pneumoniae</name>
    <dbReference type="NCBI Taxonomy" id="573"/>
    <lineage>
        <taxon>Bacteria</taxon>
        <taxon>Pseudomonadati</taxon>
        <taxon>Pseudomonadota</taxon>
        <taxon>Gammaproteobacteria</taxon>
        <taxon>Enterobacterales</taxon>
        <taxon>Enterobacteriaceae</taxon>
        <taxon>Klebsiella/Raoultella group</taxon>
        <taxon>Klebsiella</taxon>
        <taxon>Klebsiella pneumoniae complex</taxon>
    </lineage>
</organism>
<evidence type="ECO:0000250" key="1"/>
<evidence type="ECO:0000255" key="2">
    <source>
        <dbReference type="PROSITE-ProRule" id="PRU00303"/>
    </source>
</evidence>
<evidence type="ECO:0000305" key="3"/>
<evidence type="ECO:0007829" key="4">
    <source>
        <dbReference type="PDB" id="2YOC"/>
    </source>
</evidence>
<accession>P07206</accession>
<feature type="signal peptide" evidence="2">
    <location>
        <begin position="1"/>
        <end position="19"/>
    </location>
</feature>
<feature type="chain" id="PRO_0000001427" description="Pullulanase">
    <location>
        <begin position="20"/>
        <end position="1090"/>
    </location>
</feature>
<feature type="active site" description="Nucleophile" evidence="1">
    <location>
        <position position="684"/>
    </location>
</feature>
<feature type="active site" description="Proton donor" evidence="1">
    <location>
        <position position="713"/>
    </location>
</feature>
<feature type="site" description="Transition state stabilizer" evidence="1">
    <location>
        <position position="841"/>
    </location>
</feature>
<feature type="lipid moiety-binding region" description="N-palmitoyl cysteine" evidence="2">
    <location>
        <position position="20"/>
    </location>
</feature>
<feature type="lipid moiety-binding region" description="S-diacylglycerol cysteine" evidence="2">
    <location>
        <position position="20"/>
    </location>
</feature>
<feature type="sequence conflict" description="In Ref. 2; AAA25087." evidence="3" ref="2">
    <original>R</original>
    <variation>C</variation>
    <location>
        <position position="6"/>
    </location>
</feature>
<feature type="sequence conflict" description="In Ref. 2; AAA25087." evidence="3" ref="2">
    <original>V</original>
    <variation>F</variation>
    <location>
        <position position="10"/>
    </location>
</feature>
<feature type="sequence conflict" description="In Ref. 2; AAA25087." evidence="3" ref="2">
    <original>V</original>
    <variation>I</variation>
    <location>
        <position position="15"/>
    </location>
</feature>
<feature type="sequence conflict" description="In Ref. 2; AAA25087." evidence="3" ref="2">
    <original>G</original>
    <variation>S</variation>
    <location>
        <position position="23"/>
    </location>
</feature>
<feature type="sequence conflict" description="In Ref. 2; AAA25087." evidence="3" ref="2">
    <original>N</original>
    <variation>S</variation>
    <location>
        <position position="31"/>
    </location>
</feature>
<feature type="sequence conflict" description="In Ref. 2; AAA25087." evidence="3" ref="2">
    <original>T</original>
    <variation>N</variation>
    <location>
        <position position="34"/>
    </location>
</feature>
<feature type="sequence conflict" description="In Ref. 2; AAA25087." evidence="3" ref="2">
    <original>D</original>
    <variation>DGNP</variation>
    <location>
        <position position="36"/>
    </location>
</feature>
<feature type="sequence conflict" description="In Ref. 2; AAA25087." evidence="3" ref="2">
    <original>TAVE</original>
    <variation>MATA</variation>
    <location>
        <begin position="55"/>
        <end position="58"/>
    </location>
</feature>
<feature type="strand" evidence="4">
    <location>
        <begin position="60"/>
        <end position="66"/>
    </location>
</feature>
<feature type="helix" evidence="4">
    <location>
        <begin position="68"/>
        <end position="71"/>
    </location>
</feature>
<feature type="strand" evidence="4">
    <location>
        <begin position="80"/>
        <end position="87"/>
    </location>
</feature>
<feature type="strand" evidence="4">
    <location>
        <begin position="95"/>
        <end position="97"/>
    </location>
</feature>
<feature type="strand" evidence="4">
    <location>
        <begin position="118"/>
        <end position="124"/>
    </location>
</feature>
<feature type="strand" evidence="4">
    <location>
        <begin position="126"/>
        <end position="144"/>
    </location>
</feature>
<feature type="strand" evidence="4">
    <location>
        <begin position="146"/>
        <end position="149"/>
    </location>
</feature>
<feature type="turn" evidence="4">
    <location>
        <begin position="150"/>
        <end position="152"/>
    </location>
</feature>
<feature type="strand" evidence="4">
    <location>
        <begin position="157"/>
        <end position="161"/>
    </location>
</feature>
<feature type="strand" evidence="4">
    <location>
        <begin position="168"/>
        <end position="170"/>
    </location>
</feature>
<feature type="helix" evidence="4">
    <location>
        <begin position="171"/>
        <end position="178"/>
    </location>
</feature>
<feature type="strand" evidence="4">
    <location>
        <begin position="186"/>
        <end position="188"/>
    </location>
</feature>
<feature type="strand" evidence="4">
    <location>
        <begin position="190"/>
        <end position="195"/>
    </location>
</feature>
<feature type="helix" evidence="4">
    <location>
        <begin position="197"/>
        <end position="199"/>
    </location>
</feature>
<feature type="strand" evidence="4">
    <location>
        <begin position="203"/>
        <end position="213"/>
    </location>
</feature>
<feature type="strand" evidence="4">
    <location>
        <begin position="221"/>
        <end position="223"/>
    </location>
</feature>
<feature type="strand" evidence="4">
    <location>
        <begin position="231"/>
        <end position="233"/>
    </location>
</feature>
<feature type="helix" evidence="4">
    <location>
        <begin position="237"/>
        <end position="242"/>
    </location>
</feature>
<feature type="helix" evidence="4">
    <location>
        <begin position="244"/>
        <end position="246"/>
    </location>
</feature>
<feature type="strand" evidence="4">
    <location>
        <begin position="251"/>
        <end position="253"/>
    </location>
</feature>
<feature type="helix" evidence="4">
    <location>
        <begin position="260"/>
        <end position="263"/>
    </location>
</feature>
<feature type="strand" evidence="4">
    <location>
        <begin position="266"/>
        <end position="273"/>
    </location>
</feature>
<feature type="strand" evidence="4">
    <location>
        <begin position="278"/>
        <end position="286"/>
    </location>
</feature>
<feature type="helix" evidence="4">
    <location>
        <begin position="288"/>
        <end position="299"/>
    </location>
</feature>
<feature type="strand" evidence="4">
    <location>
        <begin position="305"/>
        <end position="309"/>
    </location>
</feature>
<feature type="strand" evidence="4">
    <location>
        <begin position="312"/>
        <end position="318"/>
    </location>
</feature>
<feature type="strand" evidence="4">
    <location>
        <begin position="323"/>
        <end position="330"/>
    </location>
</feature>
<feature type="strand" evidence="4">
    <location>
        <begin position="336"/>
        <end position="341"/>
    </location>
</feature>
<feature type="strand" evidence="4">
    <location>
        <begin position="343"/>
        <end position="345"/>
    </location>
</feature>
<feature type="turn" evidence="4">
    <location>
        <begin position="346"/>
        <end position="349"/>
    </location>
</feature>
<feature type="strand" evidence="4">
    <location>
        <begin position="350"/>
        <end position="355"/>
    </location>
</feature>
<feature type="helix" evidence="4">
    <location>
        <begin position="357"/>
        <end position="359"/>
    </location>
</feature>
<feature type="strand" evidence="4">
    <location>
        <begin position="363"/>
        <end position="371"/>
    </location>
</feature>
<feature type="turn" evidence="4">
    <location>
        <begin position="373"/>
        <end position="375"/>
    </location>
</feature>
<feature type="strand" evidence="4">
    <location>
        <begin position="377"/>
        <end position="383"/>
    </location>
</feature>
<feature type="strand" evidence="4">
    <location>
        <begin position="389"/>
        <end position="391"/>
    </location>
</feature>
<feature type="helix" evidence="4">
    <location>
        <begin position="393"/>
        <end position="395"/>
    </location>
</feature>
<feature type="strand" evidence="4">
    <location>
        <begin position="397"/>
        <end position="399"/>
    </location>
</feature>
<feature type="helix" evidence="4">
    <location>
        <begin position="406"/>
        <end position="408"/>
    </location>
</feature>
<feature type="helix" evidence="4">
    <location>
        <begin position="425"/>
        <end position="429"/>
    </location>
</feature>
<feature type="strand" evidence="4">
    <location>
        <begin position="432"/>
        <end position="436"/>
    </location>
</feature>
<feature type="helix" evidence="4">
    <location>
        <begin position="438"/>
        <end position="442"/>
    </location>
</feature>
<feature type="helix" evidence="4">
    <location>
        <begin position="450"/>
        <end position="452"/>
    </location>
</feature>
<feature type="helix" evidence="4">
    <location>
        <begin position="456"/>
        <end position="460"/>
    </location>
</feature>
<feature type="helix" evidence="4">
    <location>
        <begin position="465"/>
        <end position="476"/>
    </location>
</feature>
<feature type="strand" evidence="4">
    <location>
        <begin position="480"/>
        <end position="484"/>
    </location>
</feature>
<feature type="strand" evidence="4">
    <location>
        <begin position="487"/>
        <end position="492"/>
    </location>
</feature>
<feature type="helix" evidence="4">
    <location>
        <begin position="496"/>
        <end position="498"/>
    </location>
</feature>
<feature type="helix" evidence="4">
    <location>
        <begin position="506"/>
        <end position="512"/>
    </location>
</feature>
<feature type="helix" evidence="4">
    <location>
        <begin position="514"/>
        <end position="517"/>
    </location>
</feature>
<feature type="helix" evidence="4">
    <location>
        <begin position="522"/>
        <end position="525"/>
    </location>
</feature>
<feature type="strand" evidence="4">
    <location>
        <begin position="526"/>
        <end position="528"/>
    </location>
</feature>
<feature type="helix" evidence="4">
    <location>
        <begin position="531"/>
        <end position="539"/>
    </location>
</feature>
<feature type="helix" evidence="4">
    <location>
        <begin position="548"/>
        <end position="556"/>
    </location>
</feature>
<feature type="strand" evidence="4">
    <location>
        <begin position="559"/>
        <end position="561"/>
    </location>
</feature>
<feature type="strand" evidence="4">
    <location>
        <begin position="568"/>
        <end position="574"/>
    </location>
</feature>
<feature type="helix" evidence="4">
    <location>
        <begin position="586"/>
        <end position="600"/>
    </location>
</feature>
<feature type="strand" evidence="4">
    <location>
        <begin position="605"/>
        <end position="610"/>
    </location>
</feature>
<feature type="strand" evidence="4">
    <location>
        <begin position="613"/>
        <end position="616"/>
    </location>
</feature>
<feature type="turn" evidence="4">
    <location>
        <begin position="619"/>
        <end position="621"/>
    </location>
</feature>
<feature type="helix" evidence="4">
    <location>
        <begin position="627"/>
        <end position="630"/>
    </location>
</feature>
<feature type="turn" evidence="4">
    <location>
        <begin position="632"/>
        <end position="634"/>
    </location>
</feature>
<feature type="turn" evidence="4">
    <location>
        <begin position="640"/>
        <end position="642"/>
    </location>
</feature>
<feature type="strand" evidence="4">
    <location>
        <begin position="650"/>
        <end position="654"/>
    </location>
</feature>
<feature type="helix" evidence="4">
    <location>
        <begin position="659"/>
        <end position="674"/>
    </location>
</feature>
<feature type="strand" evidence="4">
    <location>
        <begin position="680"/>
        <end position="683"/>
    </location>
</feature>
<feature type="helix" evidence="4">
    <location>
        <begin position="686"/>
        <end position="688"/>
    </location>
</feature>
<feature type="helix" evidence="4">
    <location>
        <begin position="691"/>
        <end position="702"/>
    </location>
</feature>
<feature type="strand" evidence="4">
    <location>
        <begin position="709"/>
        <end position="712"/>
    </location>
</feature>
<feature type="turn" evidence="4">
    <location>
        <begin position="720"/>
        <end position="722"/>
    </location>
</feature>
<feature type="turn" evidence="4">
    <location>
        <begin position="728"/>
        <end position="734"/>
    </location>
</feature>
<feature type="strand" evidence="4">
    <location>
        <begin position="737"/>
        <end position="739"/>
    </location>
</feature>
<feature type="helix" evidence="4">
    <location>
        <begin position="741"/>
        <end position="748"/>
    </location>
</feature>
<feature type="helix" evidence="4">
    <location>
        <begin position="758"/>
        <end position="761"/>
    </location>
</feature>
<feature type="turn" evidence="4">
    <location>
        <begin position="765"/>
        <end position="771"/>
    </location>
</feature>
<feature type="helix" evidence="4">
    <location>
        <begin position="781"/>
        <end position="795"/>
    </location>
</feature>
<feature type="strand" evidence="4">
    <location>
        <begin position="799"/>
        <end position="801"/>
    </location>
</feature>
<feature type="strand" evidence="4">
    <location>
        <begin position="803"/>
        <end position="805"/>
    </location>
</feature>
<feature type="strand" evidence="4">
    <location>
        <begin position="811"/>
        <end position="813"/>
    </location>
</feature>
<feature type="helix" evidence="4">
    <location>
        <begin position="814"/>
        <end position="816"/>
    </location>
</feature>
<feature type="strand" evidence="4">
    <location>
        <begin position="817"/>
        <end position="819"/>
    </location>
</feature>
<feature type="strand" evidence="4">
    <location>
        <begin position="822"/>
        <end position="824"/>
    </location>
</feature>
<feature type="strand" evidence="4">
    <location>
        <begin position="827"/>
        <end position="829"/>
    </location>
</feature>
<feature type="helix" evidence="4">
    <location>
        <begin position="830"/>
        <end position="832"/>
    </location>
</feature>
<feature type="strand" evidence="4">
    <location>
        <begin position="833"/>
        <end position="835"/>
    </location>
</feature>
<feature type="strand" evidence="4">
    <location>
        <begin position="840"/>
        <end position="842"/>
    </location>
</feature>
<feature type="helix" evidence="4">
    <location>
        <begin position="845"/>
        <end position="852"/>
    </location>
</feature>
<feature type="helix" evidence="4">
    <location>
        <begin position="859"/>
        <end position="874"/>
    </location>
</feature>
<feature type="strand" evidence="4">
    <location>
        <begin position="876"/>
        <end position="883"/>
    </location>
</feature>
<feature type="helix" evidence="4">
    <location>
        <begin position="886"/>
        <end position="888"/>
    </location>
</feature>
<feature type="helix" evidence="4">
    <location>
        <begin position="898"/>
        <end position="900"/>
    </location>
</feature>
<feature type="helix" evidence="4">
    <location>
        <begin position="902"/>
        <end position="905"/>
    </location>
</feature>
<feature type="strand" evidence="4">
    <location>
        <begin position="918"/>
        <end position="920"/>
    </location>
</feature>
<feature type="helix" evidence="4">
    <location>
        <begin position="924"/>
        <end position="927"/>
    </location>
</feature>
<feature type="helix" evidence="4">
    <location>
        <begin position="928"/>
        <end position="930"/>
    </location>
</feature>
<feature type="helix" evidence="4">
    <location>
        <begin position="931"/>
        <end position="938"/>
    </location>
</feature>
<feature type="helix" evidence="4">
    <location>
        <begin position="946"/>
        <end position="964"/>
    </location>
</feature>
<feature type="helix" evidence="4">
    <location>
        <begin position="967"/>
        <end position="969"/>
    </location>
</feature>
<feature type="helix" evidence="4">
    <location>
        <begin position="974"/>
        <end position="980"/>
    </location>
</feature>
<feature type="strand" evidence="4">
    <location>
        <begin position="981"/>
        <end position="985"/>
    </location>
</feature>
<feature type="strand" evidence="4">
    <location>
        <begin position="994"/>
        <end position="1000"/>
    </location>
</feature>
<feature type="turn" evidence="4">
    <location>
        <begin position="1003"/>
        <end position="1005"/>
    </location>
</feature>
<feature type="strand" evidence="4">
    <location>
        <begin position="1011"/>
        <end position="1021"/>
    </location>
</feature>
<feature type="strand" evidence="4">
    <location>
        <begin position="1023"/>
        <end position="1025"/>
    </location>
</feature>
<feature type="strand" evidence="4">
    <location>
        <begin position="1027"/>
        <end position="1029"/>
    </location>
</feature>
<feature type="turn" evidence="4">
    <location>
        <begin position="1031"/>
        <end position="1034"/>
    </location>
</feature>
<feature type="helix" evidence="4">
    <location>
        <begin position="1041"/>
        <end position="1046"/>
    </location>
</feature>
<feature type="helix" evidence="4">
    <location>
        <begin position="1047"/>
        <end position="1049"/>
    </location>
</feature>
<feature type="turn" evidence="4">
    <location>
        <begin position="1051"/>
        <end position="1054"/>
    </location>
</feature>
<feature type="strand" evidence="4">
    <location>
        <begin position="1063"/>
        <end position="1065"/>
    </location>
</feature>
<feature type="strand" evidence="4">
    <location>
        <begin position="1067"/>
        <end position="1076"/>
    </location>
</feature>
<comment type="catalytic activity">
    <reaction>
        <text>Hydrolysis of (1-&gt;6)-alpha-D-glucosidic linkages in pullulan, amylopectin and glycogen, and in the alpha- and beta-limit dextrins of amylopectin and glycogen.</text>
        <dbReference type="EC" id="3.2.1.41"/>
    </reaction>
</comment>
<comment type="subunit">
    <text>Homotrimer.</text>
</comment>
<comment type="subcellular location">
    <subcellularLocation>
        <location evidence="3">Cell membrane</location>
        <topology evidence="3">Lipid-anchor</topology>
    </subcellularLocation>
</comment>
<comment type="similarity">
    <text evidence="3">Belongs to the glycosyl hydrolase 13 family.</text>
</comment>
<gene>
    <name type="primary">pulA</name>
</gene>
<sequence>MLRYTRNALVLGSLVLLSGCDNGSSSSSSGNPDTPDNQDVVVRLPDVAVPGEAVTAVENQAVIHLVDIAGITSSSAADYSSKNLYLWNNETCDALSAPVADWNDVSTTPSGSDKYGPYWVIPLNKESGCINVIVRDGTDKLIDSDLRVAFGDFTDRTVSVIAGNSAVYDSRADAFRAAFGVALAEAHWVDKNTLLWPGGQDKPIVRLYYSHSSKVAADGEGKFTDRYLKLTPTTVSQQVSMRFPHLSSYAAFKLPDNANVDELLQGETVAIAAAEDGILISATQVQTAGVLDDAYAEAAEALSYGAQLADGGVTFRVWAPTAQQVDVVVYSADKKVIGSHPMTRDSASGAWSWQGGSDLKGAFYRYAMTVYHPQSRKVEQYEVTDPYAHSLSTNSEYSQVVDLNDSALKPDGWDNLTMPHAQKTKADLAKMTIHESHIRDLSAWDQTVPAELRGKYLALTAGDSNMVQHLKTLSASGVTHVELLPVFDLATVNEFSDKVADIQQPFSRLCEVNSAVKSSEFAGYCDSGSTVEEVLNQLKQSDSQDNPQVQALNTLVAQTDSYNWGYDPFHYTVPEGSYATDPEGTTRIKEFRTMIQAIKQDLGMNVIMDVVYNHTNAAGPTDRTSVLDKIVPWYYQRLNETTGSVESATCCSDSAPEHRMFAKLIADSLAVWTTDYKIDGFRFDLMGYHPKAQILSAWERIKALNPDIYFFGEGWDSNQSDRFEIASQINLKGTGIGTFSDRLRDSVRGGGPFDSGDALRQNQGIGSGAGVLPNELASLSDDQVRHLADLTRLGMAGNLADFVMIDKDGAAKKGSEIDYNGAPGGYAADPTEVVNYVSKHDNQTLWDMISYKASQEADLATRVRMQAVSLATVMLGQGIAFDQQGSELLRSKSFTRDSYDSGDWFNRVDYSLQDNNYNVGMPRISDDGSNYEVITRVKEMVATPGEAELKQMTAFYQELTELRKSSPLFTLGDGSAVMKRVDFRNTGSDQQAGLLVMTVDDGMKAGASLDSRLDGLVVAINAAPESRTLNEFAGETLQLSAIQQTAGENSLANGVQIAADGTVTLPAWSVAVLELPQGEAQGAGLPVSSK</sequence>
<name>PULA_KLEPN</name>
<proteinExistence type="evidence at protein level"/>
<reference key="1">
    <citation type="journal article" date="1990" name="Mol. Microbiol.">
        <title>Molecular characterization of pulA and its product, pullulanase, a secreted enzyme of Klebsiella pneumoniae UNF5023.</title>
        <authorList>
            <person name="Kornacker M.G."/>
            <person name="Pugsley A.P."/>
        </authorList>
    </citation>
    <scope>NUCLEOTIDE SEQUENCE [GENOMIC DNA]</scope>
    <source>
        <strain>UNF 5023</strain>
    </source>
</reference>
<reference key="2">
    <citation type="journal article" date="1985" name="J. Bacteriol.">
        <title>Structure of two divergent promoters located in front of the gene encoding pullulanase in Klebsiella pneumoniae and positively regulated by the malT product.</title>
        <authorList>
            <person name="Chapon C."/>
            <person name="Raibaud O."/>
        </authorList>
    </citation>
    <scope>NUCLEOTIDE SEQUENCE [GENOMIC DNA] OF 1-62</scope>
</reference>
<reference key="3">
    <citation type="journal article" date="1989" name="J. Bacteriol.">
        <title>Klebsiella pneumoniae pulS gene encodes an outer membrane lipoprotein required for pullulanase secretion.</title>
        <authorList>
            <person name="D'Enfert C."/>
            <person name="Pugsley A.P."/>
        </authorList>
    </citation>
    <scope>NUCLEOTIDE SEQUENCE [GENOMIC DNA] OF 944-1090</scope>
</reference>